<comment type="subcellular location">
    <subcellularLocation>
        <location evidence="2">Cell membrane</location>
        <topology evidence="2">Multi-pass membrane protein</topology>
    </subcellularLocation>
</comment>
<comment type="similarity">
    <text evidence="2">Belongs to the cation diffusion facilitator (CDF) transporter (TC 2.A.4) family.</text>
</comment>
<organism>
    <name type="scientific">Rickettsia prowazekii (strain Madrid E)</name>
    <dbReference type="NCBI Taxonomy" id="272947"/>
    <lineage>
        <taxon>Bacteria</taxon>
        <taxon>Pseudomonadati</taxon>
        <taxon>Pseudomonadota</taxon>
        <taxon>Alphaproteobacteria</taxon>
        <taxon>Rickettsiales</taxon>
        <taxon>Rickettsiaceae</taxon>
        <taxon>Rickettsieae</taxon>
        <taxon>Rickettsia</taxon>
        <taxon>typhus group</taxon>
    </lineage>
</organism>
<feature type="chain" id="PRO_0000206136" description="Protein p34">
    <location>
        <begin position="1"/>
        <end position="300"/>
    </location>
</feature>
<feature type="transmembrane region" description="Helical" evidence="1">
    <location>
        <begin position="14"/>
        <end position="34"/>
    </location>
</feature>
<feature type="transmembrane region" description="Helical" evidence="1">
    <location>
        <begin position="39"/>
        <end position="59"/>
    </location>
</feature>
<feature type="transmembrane region" description="Helical" evidence="1">
    <location>
        <begin position="87"/>
        <end position="107"/>
    </location>
</feature>
<feature type="transmembrane region" description="Helical" evidence="1">
    <location>
        <begin position="119"/>
        <end position="139"/>
    </location>
</feature>
<feature type="transmembrane region" description="Helical" evidence="1">
    <location>
        <begin position="170"/>
        <end position="190"/>
    </location>
</feature>
<evidence type="ECO:0000255" key="1"/>
<evidence type="ECO:0000305" key="2"/>
<gene>
    <name type="primary">p34</name>
    <name type="ordered locus">RP832</name>
</gene>
<reference key="1">
    <citation type="journal article" date="1998" name="Nature">
        <title>The genome sequence of Rickettsia prowazekii and the origin of mitochondria.</title>
        <authorList>
            <person name="Andersson S.G.E."/>
            <person name="Zomorodipour A."/>
            <person name="Andersson J.O."/>
            <person name="Sicheritz-Ponten T."/>
            <person name="Alsmark U.C.M."/>
            <person name="Podowski R.M."/>
            <person name="Naeslund A.K."/>
            <person name="Eriksson A.-S."/>
            <person name="Winkler H.H."/>
            <person name="Kurland C.G."/>
        </authorList>
    </citation>
    <scope>NUCLEOTIDE SEQUENCE [LARGE SCALE GENOMIC DNA]</scope>
    <source>
        <strain>Madrid E</strain>
    </source>
</reference>
<protein>
    <recommendedName>
        <fullName>Protein p34</fullName>
    </recommendedName>
</protein>
<sequence length="300" mass="34582">MNNSHHRLIKSVSYLSVTTALIILIIKLYAWVVTSSQSILASLIDSMLDITSSFINLVALRFALQPPDHYHRFGHEKMQDLTIFSQSIFFFASAFFVGFASVKSLFIKTKPENISDGTIIMYLCMFLTIILVLYQTYVIKKTGSEIVKADKLHYFTDLLTNVIVIISINLSDYFWFVDPLFGVVISLYIFHSSYSLFKKAFKNLVDHELPEQDRQKIISIVNNHSGVKGMHEMKTRYAAQKAFIQCHLEMDGNISLYSAHKISDEIAFEILQKFPEAEIIIHQDPFGIEEHVNYREYIVR</sequence>
<keyword id="KW-1003">Cell membrane</keyword>
<keyword id="KW-0472">Membrane</keyword>
<keyword id="KW-1185">Reference proteome</keyword>
<keyword id="KW-0812">Transmembrane</keyword>
<keyword id="KW-1133">Transmembrane helix</keyword>
<keyword id="KW-0813">Transport</keyword>
<accession>Q9ZCC5</accession>
<proteinExistence type="inferred from homology"/>
<name>P34_RICPR</name>
<dbReference type="EMBL" id="AJ235273">
    <property type="protein sequence ID" value="CAA15257.1"/>
    <property type="molecule type" value="Genomic_DNA"/>
</dbReference>
<dbReference type="PIR" id="A71645">
    <property type="entry name" value="A71645"/>
</dbReference>
<dbReference type="RefSeq" id="NP_221181.1">
    <property type="nucleotide sequence ID" value="NC_000963.1"/>
</dbReference>
<dbReference type="RefSeq" id="WP_004596826.1">
    <property type="nucleotide sequence ID" value="NC_000963.1"/>
</dbReference>
<dbReference type="SMR" id="Q9ZCC5"/>
<dbReference type="STRING" id="272947.gene:17555901"/>
<dbReference type="EnsemblBacteria" id="CAA15257">
    <property type="protein sequence ID" value="CAA15257"/>
    <property type="gene ID" value="CAA15257"/>
</dbReference>
<dbReference type="KEGG" id="rpr:RP832"/>
<dbReference type="PATRIC" id="fig|272947.5.peg.869"/>
<dbReference type="eggNOG" id="COG0053">
    <property type="taxonomic scope" value="Bacteria"/>
</dbReference>
<dbReference type="HOGENOM" id="CLU_013430_3_0_5"/>
<dbReference type="OrthoDB" id="9806522at2"/>
<dbReference type="Proteomes" id="UP000002480">
    <property type="component" value="Chromosome"/>
</dbReference>
<dbReference type="GO" id="GO:0005886">
    <property type="term" value="C:plasma membrane"/>
    <property type="evidence" value="ECO:0007669"/>
    <property type="project" value="UniProtKB-SubCell"/>
</dbReference>
<dbReference type="GO" id="GO:0015086">
    <property type="term" value="F:cadmium ion transmembrane transporter activity"/>
    <property type="evidence" value="ECO:0007669"/>
    <property type="project" value="TreeGrafter"/>
</dbReference>
<dbReference type="GO" id="GO:0015093">
    <property type="term" value="F:ferrous iron transmembrane transporter activity"/>
    <property type="evidence" value="ECO:0007669"/>
    <property type="project" value="TreeGrafter"/>
</dbReference>
<dbReference type="GO" id="GO:0015341">
    <property type="term" value="F:zinc efflux antiporter activity"/>
    <property type="evidence" value="ECO:0007669"/>
    <property type="project" value="TreeGrafter"/>
</dbReference>
<dbReference type="GO" id="GO:0006882">
    <property type="term" value="P:intracellular zinc ion homeostasis"/>
    <property type="evidence" value="ECO:0007669"/>
    <property type="project" value="TreeGrafter"/>
</dbReference>
<dbReference type="FunFam" id="3.30.70.1350:FF:000002">
    <property type="entry name" value="Ferrous-iron efflux pump FieF"/>
    <property type="match status" value="1"/>
</dbReference>
<dbReference type="Gene3D" id="1.20.1510.10">
    <property type="entry name" value="Cation efflux protein transmembrane domain"/>
    <property type="match status" value="1"/>
</dbReference>
<dbReference type="Gene3D" id="3.30.70.1350">
    <property type="entry name" value="Cation efflux protein, cytoplasmic domain"/>
    <property type="match status" value="1"/>
</dbReference>
<dbReference type="InterPro" id="IPR002524">
    <property type="entry name" value="Cation_efflux"/>
</dbReference>
<dbReference type="InterPro" id="IPR027470">
    <property type="entry name" value="Cation_efflux_CTD"/>
</dbReference>
<dbReference type="InterPro" id="IPR036837">
    <property type="entry name" value="Cation_efflux_CTD_sf"/>
</dbReference>
<dbReference type="InterPro" id="IPR027469">
    <property type="entry name" value="Cation_efflux_TMD_sf"/>
</dbReference>
<dbReference type="InterPro" id="IPR050291">
    <property type="entry name" value="CDF_Transporter"/>
</dbReference>
<dbReference type="NCBIfam" id="TIGR01297">
    <property type="entry name" value="CDF"/>
    <property type="match status" value="1"/>
</dbReference>
<dbReference type="PANTHER" id="PTHR43840:SF41">
    <property type="entry name" value="CATION-EFFLUX PUMP FIEF"/>
    <property type="match status" value="1"/>
</dbReference>
<dbReference type="PANTHER" id="PTHR43840">
    <property type="entry name" value="MITOCHONDRIAL METAL TRANSPORTER 1-RELATED"/>
    <property type="match status" value="1"/>
</dbReference>
<dbReference type="Pfam" id="PF01545">
    <property type="entry name" value="Cation_efflux"/>
    <property type="match status" value="1"/>
</dbReference>
<dbReference type="Pfam" id="PF16916">
    <property type="entry name" value="ZT_dimer"/>
    <property type="match status" value="1"/>
</dbReference>
<dbReference type="SUPFAM" id="SSF160240">
    <property type="entry name" value="Cation efflux protein cytoplasmic domain-like"/>
    <property type="match status" value="1"/>
</dbReference>
<dbReference type="SUPFAM" id="SSF161111">
    <property type="entry name" value="Cation efflux protein transmembrane domain-like"/>
    <property type="match status" value="1"/>
</dbReference>